<protein>
    <recommendedName>
        <fullName evidence="3">Small ribosomal subunit protein bS1m</fullName>
    </recommendedName>
</protein>
<dbReference type="EMBL" id="CM002239">
    <property type="protein sequence ID" value="EDO65059.1"/>
    <property type="molecule type" value="Genomic_DNA"/>
</dbReference>
<dbReference type="RefSeq" id="XP_001728150.1">
    <property type="nucleotide sequence ID" value="XM_001728098.2"/>
</dbReference>
<dbReference type="PDB" id="6YW5">
    <property type="method" value="EM"/>
    <property type="resolution" value="2.85 A"/>
    <property type="chains" value="AA=1-470"/>
</dbReference>
<dbReference type="PDB" id="6YWX">
    <property type="method" value="EM"/>
    <property type="resolution" value="3.10 A"/>
    <property type="chains" value="AA=1-470"/>
</dbReference>
<dbReference type="PDBsum" id="6YW5"/>
<dbReference type="PDBsum" id="6YWX"/>
<dbReference type="EMDB" id="EMD-10958"/>
<dbReference type="EMDB" id="EMD-10978"/>
<dbReference type="SMR" id="A7UWX2"/>
<dbReference type="STRING" id="367110.A7UWX2"/>
<dbReference type="PaxDb" id="5141-EFNCRP00000007061"/>
<dbReference type="EnsemblFungi" id="EDO65059">
    <property type="protein sequence ID" value="EDO65059"/>
    <property type="gene ID" value="NCU11345"/>
</dbReference>
<dbReference type="GeneID" id="5847292"/>
<dbReference type="KEGG" id="ncr:NCU11345"/>
<dbReference type="VEuPathDB" id="FungiDB:NCU11345"/>
<dbReference type="HOGENOM" id="CLU_024465_0_0_1"/>
<dbReference type="InParanoid" id="A7UWX2"/>
<dbReference type="OMA" id="ELHMPMS"/>
<dbReference type="OrthoDB" id="3913595at2759"/>
<dbReference type="Proteomes" id="UP000001805">
    <property type="component" value="Chromosome 4, Linkage Group IV"/>
</dbReference>
<dbReference type="GO" id="GO:0005763">
    <property type="term" value="C:mitochondrial small ribosomal subunit"/>
    <property type="evidence" value="ECO:0000318"/>
    <property type="project" value="GO_Central"/>
</dbReference>
<dbReference type="GO" id="GO:0003735">
    <property type="term" value="F:structural constituent of ribosome"/>
    <property type="evidence" value="ECO:0000318"/>
    <property type="project" value="GO_Central"/>
</dbReference>
<dbReference type="GO" id="GO:0070124">
    <property type="term" value="P:mitochondrial translational initiation"/>
    <property type="evidence" value="ECO:0000318"/>
    <property type="project" value="GO_Central"/>
</dbReference>
<dbReference type="InterPro" id="IPR016712">
    <property type="entry name" value="Rbsml_bS1m-like"/>
</dbReference>
<dbReference type="PANTHER" id="PTHR28058">
    <property type="entry name" value="37S RIBOSOMAL PROTEIN MRP51, MITOCHONDRIAL"/>
    <property type="match status" value="1"/>
</dbReference>
<dbReference type="PANTHER" id="PTHR28058:SF1">
    <property type="entry name" value="SMALL RIBOSOMAL SUBUNIT PROTEIN BS1M"/>
    <property type="match status" value="1"/>
</dbReference>
<dbReference type="Pfam" id="PF11709">
    <property type="entry name" value="Mit_ribos_Mrp51"/>
    <property type="match status" value="1"/>
</dbReference>
<gene>
    <name type="primary">mrp51</name>
    <name type="ORF">NCU11345</name>
</gene>
<accession>A7UWX2</accession>
<feature type="chain" id="PRO_0000458566" description="Small ribosomal subunit protein bS1m">
    <location>
        <begin position="1"/>
        <end position="470"/>
    </location>
</feature>
<feature type="region of interest" description="Disordered" evidence="1">
    <location>
        <begin position="436"/>
        <end position="470"/>
    </location>
</feature>
<feature type="compositionally biased region" description="Low complexity" evidence="1">
    <location>
        <begin position="453"/>
        <end position="464"/>
    </location>
</feature>
<sequence length="470" mass="51525">MAFSRGVSPGGALLRTSRMFSLPPVIPPPPGNKLQMISERASATEAYPTHQVLTTFESSRSRGDWGLKRPLPLKSTTGTTYPMVKVKEMDSLEQITDFTSGTQHGLTLKKFQALNIPISTPSEISDPSRLFRPVQRSVFEADTDVTAFSPDEQIQEAEKRWKFSGPWLAGMTPGEFKEYLAKTVRPKRAEFRKFIQKKIAAQKTEAANRELQETAALRGDAVAETQEPFKPESITDDEVTEYLRRLRNDNQVLYDLVGQFLDLAPLKPPQAAEARQHSLLVNLRATDSPYGGRGPPITHPSAGISYLRTAAYLNNHPIYGPQKSHPPVQARVLKPRRGGLGNDAKIGVAGFVADGPLGTSHSNLRGNSVMDKFDPSIEGGAKLWVNVDKATVDSTGRVQLTVSDAKATDVLIAKELIGDAREPIFGSAPKRQEKTFKKIPMTAARLRGRYENSDSPSSPTMSGSSGYGLR</sequence>
<reference key="1">
    <citation type="journal article" date="2003" name="Nature">
        <title>The genome sequence of the filamentous fungus Neurospora crassa.</title>
        <authorList>
            <person name="Galagan J.E."/>
            <person name="Calvo S.E."/>
            <person name="Borkovich K.A."/>
            <person name="Selker E.U."/>
            <person name="Read N.D."/>
            <person name="Jaffe D.B."/>
            <person name="FitzHugh W."/>
            <person name="Ma L.-J."/>
            <person name="Smirnov S."/>
            <person name="Purcell S."/>
            <person name="Rehman B."/>
            <person name="Elkins T."/>
            <person name="Engels R."/>
            <person name="Wang S."/>
            <person name="Nielsen C.B."/>
            <person name="Butler J."/>
            <person name="Endrizzi M."/>
            <person name="Qui D."/>
            <person name="Ianakiev P."/>
            <person name="Bell-Pedersen D."/>
            <person name="Nelson M.A."/>
            <person name="Werner-Washburne M."/>
            <person name="Selitrennikoff C.P."/>
            <person name="Kinsey J.A."/>
            <person name="Braun E.L."/>
            <person name="Zelter A."/>
            <person name="Schulte U."/>
            <person name="Kothe G.O."/>
            <person name="Jedd G."/>
            <person name="Mewes H.-W."/>
            <person name="Staben C."/>
            <person name="Marcotte E."/>
            <person name="Greenberg D."/>
            <person name="Roy A."/>
            <person name="Foley K."/>
            <person name="Naylor J."/>
            <person name="Stange-Thomann N."/>
            <person name="Barrett R."/>
            <person name="Gnerre S."/>
            <person name="Kamal M."/>
            <person name="Kamvysselis M."/>
            <person name="Mauceli E.W."/>
            <person name="Bielke C."/>
            <person name="Rudd S."/>
            <person name="Frishman D."/>
            <person name="Krystofova S."/>
            <person name="Rasmussen C."/>
            <person name="Metzenberg R.L."/>
            <person name="Perkins D.D."/>
            <person name="Kroken S."/>
            <person name="Cogoni C."/>
            <person name="Macino G."/>
            <person name="Catcheside D.E.A."/>
            <person name="Li W."/>
            <person name="Pratt R.J."/>
            <person name="Osmani S.A."/>
            <person name="DeSouza C.P.C."/>
            <person name="Glass N.L."/>
            <person name="Orbach M.J."/>
            <person name="Berglund J.A."/>
            <person name="Voelker R."/>
            <person name="Yarden O."/>
            <person name="Plamann M."/>
            <person name="Seiler S."/>
            <person name="Dunlap J.C."/>
            <person name="Radford A."/>
            <person name="Aramayo R."/>
            <person name="Natvig D.O."/>
            <person name="Alex L.A."/>
            <person name="Mannhaupt G."/>
            <person name="Ebbole D.J."/>
            <person name="Freitag M."/>
            <person name="Paulsen I."/>
            <person name="Sachs M.S."/>
            <person name="Lander E.S."/>
            <person name="Nusbaum C."/>
            <person name="Birren B.W."/>
        </authorList>
    </citation>
    <scope>NUCLEOTIDE SEQUENCE [LARGE SCALE GENOMIC DNA]</scope>
    <source>
        <strain>ATCC 24698 / 74-OR23-1A / CBS 708.71 / DSM 1257 / FGSC 987</strain>
    </source>
</reference>
<reference evidence="6 7" key="2">
    <citation type="journal article" date="2020" name="Nat. Commun.">
        <title>Analysis of translating mitoribosome reveals functional characteristics of translation in mitochondria of fungi.</title>
        <authorList>
            <person name="Itoh Y."/>
            <person name="Naschberger A."/>
            <person name="Mortezaei N."/>
            <person name="Herrmann J.M."/>
            <person name="Amunts A."/>
        </authorList>
    </citation>
    <scope>STRUCTURE BY ELECTRON MICROSCOPY (2.85 ANGSTROMS)</scope>
</reference>
<name>RT51_NEUCR</name>
<proteinExistence type="evidence at protein level"/>
<comment type="function">
    <text evidence="5">Component of the mitochondrial ribosome (mitoribosome), a dedicated translation machinery responsible for the synthesis of mitochondrial genome-encoded proteins, including at least some of the essential transmembrane subunits of the mitochondrial respiratory chain. The mitoribosomes are attached to the mitochondrial inner membrane and translation products are cotranslationally integrated into the membrane.</text>
</comment>
<comment type="subunit">
    <text evidence="2">Component of the mitochondrial small ribosomal subunit (mt-SSU). Mature N.crassa 74S mitochondrial ribosomes consist of a small (37S) and a large (54S) subunit. The 37S small subunit contains a 16S ribosomal RNA (16S mt-rRNA) and 32 different proteins. The 54S large subunit contains a 23S rRNA (23S mt-rRNA) and 42 different proteins.</text>
</comment>
<comment type="subcellular location">
    <subcellularLocation>
        <location evidence="2">Mitochondrion</location>
    </subcellularLocation>
</comment>
<comment type="similarity">
    <text evidence="4">Belongs to the bacterial ribosomal protein bS1 family.</text>
</comment>
<evidence type="ECO:0000256" key="1">
    <source>
        <dbReference type="SAM" id="MobiDB-lite"/>
    </source>
</evidence>
<evidence type="ECO:0000269" key="2">
    <source>
    </source>
</evidence>
<evidence type="ECO:0000303" key="3">
    <source>
    </source>
</evidence>
<evidence type="ECO:0000305" key="4"/>
<evidence type="ECO:0000305" key="5">
    <source>
    </source>
</evidence>
<evidence type="ECO:0007744" key="6">
    <source>
        <dbReference type="PDB" id="6YW5"/>
    </source>
</evidence>
<evidence type="ECO:0007744" key="7">
    <source>
        <dbReference type="PDB" id="6YWX"/>
    </source>
</evidence>
<keyword id="KW-0002">3D-structure</keyword>
<keyword id="KW-0496">Mitochondrion</keyword>
<keyword id="KW-1185">Reference proteome</keyword>
<organism>
    <name type="scientific">Neurospora crassa (strain ATCC 24698 / 74-OR23-1A / CBS 708.71 / DSM 1257 / FGSC 987)</name>
    <dbReference type="NCBI Taxonomy" id="367110"/>
    <lineage>
        <taxon>Eukaryota</taxon>
        <taxon>Fungi</taxon>
        <taxon>Dikarya</taxon>
        <taxon>Ascomycota</taxon>
        <taxon>Pezizomycotina</taxon>
        <taxon>Sordariomycetes</taxon>
        <taxon>Sordariomycetidae</taxon>
        <taxon>Sordariales</taxon>
        <taxon>Sordariaceae</taxon>
        <taxon>Neurospora</taxon>
    </lineage>
</organism>